<accession>A2BVH0</accession>
<comment type="function">
    <text evidence="1">Catalyzes the attachment of proline to tRNA(Pro) in a two-step reaction: proline is first activated by ATP to form Pro-AMP and then transferred to the acceptor end of tRNA(Pro). As ProRS can inadvertently accommodate and process non-cognate amino acids such as alanine and cysteine, to avoid such errors it has two additional distinct editing activities against alanine. One activity is designated as 'pretransfer' editing and involves the tRNA(Pro)-independent hydrolysis of activated Ala-AMP. The other activity is designated 'posttransfer' editing and involves deacylation of mischarged Ala-tRNA(Pro). The misacylated Cys-tRNA(Pro) is not edited by ProRS.</text>
</comment>
<comment type="catalytic activity">
    <reaction evidence="1">
        <text>tRNA(Pro) + L-proline + ATP = L-prolyl-tRNA(Pro) + AMP + diphosphate</text>
        <dbReference type="Rhea" id="RHEA:14305"/>
        <dbReference type="Rhea" id="RHEA-COMP:9700"/>
        <dbReference type="Rhea" id="RHEA-COMP:9702"/>
        <dbReference type="ChEBI" id="CHEBI:30616"/>
        <dbReference type="ChEBI" id="CHEBI:33019"/>
        <dbReference type="ChEBI" id="CHEBI:60039"/>
        <dbReference type="ChEBI" id="CHEBI:78442"/>
        <dbReference type="ChEBI" id="CHEBI:78532"/>
        <dbReference type="ChEBI" id="CHEBI:456215"/>
        <dbReference type="EC" id="6.1.1.15"/>
    </reaction>
</comment>
<comment type="subunit">
    <text evidence="1">Homodimer.</text>
</comment>
<comment type="subcellular location">
    <subcellularLocation>
        <location evidence="1">Cytoplasm</location>
    </subcellularLocation>
</comment>
<comment type="domain">
    <text evidence="1">Consists of three domains: the N-terminal catalytic domain, the editing domain and the C-terminal anticodon-binding domain.</text>
</comment>
<comment type="similarity">
    <text evidence="1">Belongs to the class-II aminoacyl-tRNA synthetase family. ProS type 1 subfamily.</text>
</comment>
<organism>
    <name type="scientific">Prochlorococcus marinus (strain MIT 9515)</name>
    <dbReference type="NCBI Taxonomy" id="167542"/>
    <lineage>
        <taxon>Bacteria</taxon>
        <taxon>Bacillati</taxon>
        <taxon>Cyanobacteriota</taxon>
        <taxon>Cyanophyceae</taxon>
        <taxon>Synechococcales</taxon>
        <taxon>Prochlorococcaceae</taxon>
        <taxon>Prochlorococcus</taxon>
    </lineage>
</organism>
<sequence>MRVTTSFPLGTLRDTPSEAEIISHQLLLKGGYIRRVNSGIYAYMPIMLKVIEKISNIIEKELNNNGCSKLLLPQLHPAELWKRSERWEGYTAGEGIMFNLKDRQGKEFGLAPTHEEVITNIASEIINSYKQLPLCFYQIQTKFRDEIRPRFGLMRSREFIMKDGYSFHSSKEDLSSFYEKMERSYENIFKNCGLDTVGVDADSGAIGGAASKEFMVTADAGEDYILFTESGSYAANIEKAISLPSKEIPLKSFETEWLETPNQKSIVDICKENDLDASQIVKVVIFVAKFENKSQLPILTCIRGDQHINEIKLFNLISKKYSSNLISLEIIEDNATIEKNLTNFPLGYIGPDINDEVIKNSSSWDKSWIRIADHSANNLSSFVSGSNKVNFHKVFQTFSFIDNQFLISDIRNAKKGDRISLESNEELKEKRGIEIGHIFQLGQKYSEKLNAKFSDKDGKLKNLWMGCYGIGVTRIAQAAIEQNHDENGISWPIQISPFEILIIPTNLKDPYQTKLTEEIYKEFESKKIDVLLDDRDVRAGVKFKDADLIGIPFQIIIGRDSINKEVEFICRSSKRKIKISSQNLLEKFISESKILYNENS</sequence>
<keyword id="KW-0030">Aminoacyl-tRNA synthetase</keyword>
<keyword id="KW-0067">ATP-binding</keyword>
<keyword id="KW-0963">Cytoplasm</keyword>
<keyword id="KW-0436">Ligase</keyword>
<keyword id="KW-0547">Nucleotide-binding</keyword>
<keyword id="KW-0648">Protein biosynthesis</keyword>
<name>SYP_PROM5</name>
<proteinExistence type="inferred from homology"/>
<feature type="chain" id="PRO_0000288364" description="Proline--tRNA ligase">
    <location>
        <begin position="1"/>
        <end position="600"/>
    </location>
</feature>
<gene>
    <name evidence="1" type="primary">proS</name>
    <name type="ordered locus">P9515_05721</name>
</gene>
<dbReference type="EC" id="6.1.1.15" evidence="1"/>
<dbReference type="EMBL" id="CP000552">
    <property type="protein sequence ID" value="ABM71781.1"/>
    <property type="molecule type" value="Genomic_DNA"/>
</dbReference>
<dbReference type="RefSeq" id="WP_011819888.1">
    <property type="nucleotide sequence ID" value="NC_008817.1"/>
</dbReference>
<dbReference type="SMR" id="A2BVH0"/>
<dbReference type="STRING" id="167542.P9515_05721"/>
<dbReference type="GeneID" id="60201676"/>
<dbReference type="KEGG" id="pmc:P9515_05721"/>
<dbReference type="eggNOG" id="COG0442">
    <property type="taxonomic scope" value="Bacteria"/>
</dbReference>
<dbReference type="HOGENOM" id="CLU_016739_0_0_3"/>
<dbReference type="OrthoDB" id="9809052at2"/>
<dbReference type="Proteomes" id="UP000001589">
    <property type="component" value="Chromosome"/>
</dbReference>
<dbReference type="GO" id="GO:0005829">
    <property type="term" value="C:cytosol"/>
    <property type="evidence" value="ECO:0007669"/>
    <property type="project" value="TreeGrafter"/>
</dbReference>
<dbReference type="GO" id="GO:0002161">
    <property type="term" value="F:aminoacyl-tRNA deacylase activity"/>
    <property type="evidence" value="ECO:0007669"/>
    <property type="project" value="InterPro"/>
</dbReference>
<dbReference type="GO" id="GO:0005524">
    <property type="term" value="F:ATP binding"/>
    <property type="evidence" value="ECO:0007669"/>
    <property type="project" value="UniProtKB-UniRule"/>
</dbReference>
<dbReference type="GO" id="GO:0004827">
    <property type="term" value="F:proline-tRNA ligase activity"/>
    <property type="evidence" value="ECO:0007669"/>
    <property type="project" value="UniProtKB-UniRule"/>
</dbReference>
<dbReference type="GO" id="GO:0006433">
    <property type="term" value="P:prolyl-tRNA aminoacylation"/>
    <property type="evidence" value="ECO:0007669"/>
    <property type="project" value="UniProtKB-UniRule"/>
</dbReference>
<dbReference type="CDD" id="cd04334">
    <property type="entry name" value="ProRS-INS"/>
    <property type="match status" value="1"/>
</dbReference>
<dbReference type="CDD" id="cd00861">
    <property type="entry name" value="ProRS_anticodon_short"/>
    <property type="match status" value="1"/>
</dbReference>
<dbReference type="Gene3D" id="3.40.50.800">
    <property type="entry name" value="Anticodon-binding domain"/>
    <property type="match status" value="1"/>
</dbReference>
<dbReference type="Gene3D" id="3.30.930.10">
    <property type="entry name" value="Bira Bifunctional Protein, Domain 2"/>
    <property type="match status" value="2"/>
</dbReference>
<dbReference type="HAMAP" id="MF_01569">
    <property type="entry name" value="Pro_tRNA_synth_type1"/>
    <property type="match status" value="1"/>
</dbReference>
<dbReference type="InterPro" id="IPR002314">
    <property type="entry name" value="aa-tRNA-synt_IIb"/>
</dbReference>
<dbReference type="InterPro" id="IPR006195">
    <property type="entry name" value="aa-tRNA-synth_II"/>
</dbReference>
<dbReference type="InterPro" id="IPR045864">
    <property type="entry name" value="aa-tRNA-synth_II/BPL/LPL"/>
</dbReference>
<dbReference type="InterPro" id="IPR004154">
    <property type="entry name" value="Anticodon-bd"/>
</dbReference>
<dbReference type="InterPro" id="IPR036621">
    <property type="entry name" value="Anticodon-bd_dom_sf"/>
</dbReference>
<dbReference type="InterPro" id="IPR002316">
    <property type="entry name" value="Pro-tRNA-ligase_IIa"/>
</dbReference>
<dbReference type="InterPro" id="IPR004500">
    <property type="entry name" value="Pro-tRNA-synth_IIa_bac-type"/>
</dbReference>
<dbReference type="InterPro" id="IPR023717">
    <property type="entry name" value="Pro-tRNA-Synthase_IIa_type1"/>
</dbReference>
<dbReference type="InterPro" id="IPR050062">
    <property type="entry name" value="Pro-tRNA_synthetase"/>
</dbReference>
<dbReference type="InterPro" id="IPR044140">
    <property type="entry name" value="ProRS_anticodon_short"/>
</dbReference>
<dbReference type="InterPro" id="IPR036754">
    <property type="entry name" value="YbaK/aa-tRNA-synt-asso_dom_sf"/>
</dbReference>
<dbReference type="NCBIfam" id="NF006625">
    <property type="entry name" value="PRK09194.1"/>
    <property type="match status" value="1"/>
</dbReference>
<dbReference type="NCBIfam" id="TIGR00409">
    <property type="entry name" value="proS_fam_II"/>
    <property type="match status" value="1"/>
</dbReference>
<dbReference type="PANTHER" id="PTHR42753">
    <property type="entry name" value="MITOCHONDRIAL RIBOSOME PROTEIN L39/PROLYL-TRNA LIGASE FAMILY MEMBER"/>
    <property type="match status" value="1"/>
</dbReference>
<dbReference type="PANTHER" id="PTHR42753:SF2">
    <property type="entry name" value="PROLINE--TRNA LIGASE"/>
    <property type="match status" value="1"/>
</dbReference>
<dbReference type="Pfam" id="PF03129">
    <property type="entry name" value="HGTP_anticodon"/>
    <property type="match status" value="1"/>
</dbReference>
<dbReference type="Pfam" id="PF00587">
    <property type="entry name" value="tRNA-synt_2b"/>
    <property type="match status" value="1"/>
</dbReference>
<dbReference type="PRINTS" id="PR01046">
    <property type="entry name" value="TRNASYNTHPRO"/>
</dbReference>
<dbReference type="SUPFAM" id="SSF52954">
    <property type="entry name" value="Class II aaRS ABD-related"/>
    <property type="match status" value="1"/>
</dbReference>
<dbReference type="SUPFAM" id="SSF55681">
    <property type="entry name" value="Class II aaRS and biotin synthetases"/>
    <property type="match status" value="1"/>
</dbReference>
<dbReference type="SUPFAM" id="SSF55826">
    <property type="entry name" value="YbaK/ProRS associated domain"/>
    <property type="match status" value="1"/>
</dbReference>
<dbReference type="PROSITE" id="PS50862">
    <property type="entry name" value="AA_TRNA_LIGASE_II"/>
    <property type="match status" value="1"/>
</dbReference>
<protein>
    <recommendedName>
        <fullName evidence="1">Proline--tRNA ligase</fullName>
        <ecNumber evidence="1">6.1.1.15</ecNumber>
    </recommendedName>
    <alternativeName>
        <fullName evidence="1">Prolyl-tRNA synthetase</fullName>
        <shortName evidence="1">ProRS</shortName>
    </alternativeName>
</protein>
<reference key="1">
    <citation type="journal article" date="2007" name="PLoS Genet.">
        <title>Patterns and implications of gene gain and loss in the evolution of Prochlorococcus.</title>
        <authorList>
            <person name="Kettler G.C."/>
            <person name="Martiny A.C."/>
            <person name="Huang K."/>
            <person name="Zucker J."/>
            <person name="Coleman M.L."/>
            <person name="Rodrigue S."/>
            <person name="Chen F."/>
            <person name="Lapidus A."/>
            <person name="Ferriera S."/>
            <person name="Johnson J."/>
            <person name="Steglich C."/>
            <person name="Church G.M."/>
            <person name="Richardson P."/>
            <person name="Chisholm S.W."/>
        </authorList>
    </citation>
    <scope>NUCLEOTIDE SEQUENCE [LARGE SCALE GENOMIC DNA]</scope>
    <source>
        <strain>MIT 9515</strain>
    </source>
</reference>
<evidence type="ECO:0000255" key="1">
    <source>
        <dbReference type="HAMAP-Rule" id="MF_01569"/>
    </source>
</evidence>